<gene>
    <name type="ordered locus">BQ2027_MB3100C</name>
</gene>
<evidence type="ECO:0000305" key="1"/>
<reference key="1">
    <citation type="journal article" date="2003" name="Proc. Natl. Acad. Sci. U.S.A.">
        <title>The complete genome sequence of Mycobacterium bovis.</title>
        <authorList>
            <person name="Garnier T."/>
            <person name="Eiglmeier K."/>
            <person name="Camus J.-C."/>
            <person name="Medina N."/>
            <person name="Mansoor H."/>
            <person name="Pryor M."/>
            <person name="Duthoy S."/>
            <person name="Grondin S."/>
            <person name="Lacroix C."/>
            <person name="Monsempe C."/>
            <person name="Simon S."/>
            <person name="Harris B."/>
            <person name="Atkin R."/>
            <person name="Doggett J."/>
            <person name="Mayes R."/>
            <person name="Keating L."/>
            <person name="Wheeler P.R."/>
            <person name="Parkhill J."/>
            <person name="Barrell B.G."/>
            <person name="Cole S.T."/>
            <person name="Gordon S.V."/>
            <person name="Hewinson R.G."/>
        </authorList>
    </citation>
    <scope>NUCLEOTIDE SEQUENCE [LARGE SCALE GENOMIC DNA]</scope>
    <source>
        <strain>ATCC BAA-935 / AF2122/97</strain>
    </source>
</reference>
<reference key="2">
    <citation type="journal article" date="2017" name="Genome Announc.">
        <title>Updated reference genome sequence and annotation of Mycobacterium bovis AF2122/97.</title>
        <authorList>
            <person name="Malone K.M."/>
            <person name="Farrell D."/>
            <person name="Stuber T.P."/>
            <person name="Schubert O.T."/>
            <person name="Aebersold R."/>
            <person name="Robbe-Austerman S."/>
            <person name="Gordon S.V."/>
        </authorList>
    </citation>
    <scope>NUCLEOTIDE SEQUENCE [LARGE SCALE GENOMIC DNA]</scope>
    <scope>GENOME REANNOTATION</scope>
    <source>
        <strain>ATCC BAA-935 / AF2122/97</strain>
    </source>
</reference>
<feature type="chain" id="PRO_0000104113" description="Uncharacterized protein Mb3100c">
    <location>
        <begin position="1"/>
        <end position="118"/>
    </location>
</feature>
<comment type="similarity">
    <text evidence="1">To E.coli YeaO.</text>
</comment>
<proteinExistence type="predicted"/>
<dbReference type="EMBL" id="LT708304">
    <property type="protein sequence ID" value="SIU01725.1"/>
    <property type="molecule type" value="Genomic_DNA"/>
</dbReference>
<dbReference type="RefSeq" id="NP_856745.1">
    <property type="nucleotide sequence ID" value="NC_002945.3"/>
</dbReference>
<dbReference type="RefSeq" id="WP_003416050.1">
    <property type="nucleotide sequence ID" value="NC_002945.4"/>
</dbReference>
<dbReference type="KEGG" id="mbo:BQ2027_MB3100C"/>
<dbReference type="PATRIC" id="fig|233413.5.peg.3406"/>
<dbReference type="Proteomes" id="UP000001419">
    <property type="component" value="Chromosome"/>
</dbReference>
<dbReference type="InterPro" id="IPR052552">
    <property type="entry name" value="YeaO-like"/>
</dbReference>
<dbReference type="PANTHER" id="PTHR36849:SF1">
    <property type="entry name" value="CYTOPLASMIC PROTEIN"/>
    <property type="match status" value="1"/>
</dbReference>
<dbReference type="PANTHER" id="PTHR36849">
    <property type="entry name" value="CYTOPLASMIC PROTEIN-RELATED"/>
    <property type="match status" value="1"/>
</dbReference>
<dbReference type="Pfam" id="PF22752">
    <property type="entry name" value="DUF488-N3i"/>
    <property type="match status" value="1"/>
</dbReference>
<sequence length="118" mass="13751">MVRETRVRVARVYEDIDPDDGQRVLVDRIWPHGIRKDDQRVGIWCKDVAPSKELREWYHHQPERFDEFASRYQEELHDSAALAELRKLTGRSVVTPVTATRHVARSHAAVLAQLLNGR</sequence>
<accession>P65064</accession>
<accession>A0A1R3Y4Y0</accession>
<accession>P95085</accession>
<accession>X2BMJ4</accession>
<protein>
    <recommendedName>
        <fullName>Uncharacterized protein Mb3100c</fullName>
    </recommendedName>
</protein>
<name>Y3100_MYCBO</name>
<organism>
    <name type="scientific">Mycobacterium bovis (strain ATCC BAA-935 / AF2122/97)</name>
    <dbReference type="NCBI Taxonomy" id="233413"/>
    <lineage>
        <taxon>Bacteria</taxon>
        <taxon>Bacillati</taxon>
        <taxon>Actinomycetota</taxon>
        <taxon>Actinomycetes</taxon>
        <taxon>Mycobacteriales</taxon>
        <taxon>Mycobacteriaceae</taxon>
        <taxon>Mycobacterium</taxon>
        <taxon>Mycobacterium tuberculosis complex</taxon>
    </lineage>
</organism>
<keyword id="KW-1185">Reference proteome</keyword>